<protein>
    <recommendedName>
        <fullName evidence="1">Holliday junction branch migration complex subunit RuvA</fullName>
    </recommendedName>
</protein>
<gene>
    <name evidence="1" type="primary">ruvA</name>
    <name type="ordered locus">VV2285</name>
</gene>
<name>RUVA_VIBVY</name>
<keyword id="KW-0963">Cytoplasm</keyword>
<keyword id="KW-0227">DNA damage</keyword>
<keyword id="KW-0233">DNA recombination</keyword>
<keyword id="KW-0234">DNA repair</keyword>
<keyword id="KW-0238">DNA-binding</keyword>
<reference key="1">
    <citation type="journal article" date="2003" name="Genome Res.">
        <title>Comparative genome analysis of Vibrio vulnificus, a marine pathogen.</title>
        <authorList>
            <person name="Chen C.-Y."/>
            <person name="Wu K.-M."/>
            <person name="Chang Y.-C."/>
            <person name="Chang C.-H."/>
            <person name="Tsai H.-C."/>
            <person name="Liao T.-L."/>
            <person name="Liu Y.-M."/>
            <person name="Chen H.-J."/>
            <person name="Shen A.B.-T."/>
            <person name="Li J.-C."/>
            <person name="Su T.-L."/>
            <person name="Shao C.-P."/>
            <person name="Lee C.-T."/>
            <person name="Hor L.-I."/>
            <person name="Tsai S.-F."/>
        </authorList>
    </citation>
    <scope>NUCLEOTIDE SEQUENCE [LARGE SCALE GENOMIC DNA]</scope>
    <source>
        <strain>YJ016</strain>
    </source>
</reference>
<feature type="chain" id="PRO_0000094710" description="Holliday junction branch migration complex subunit RuvA">
    <location>
        <begin position="1"/>
        <end position="204"/>
    </location>
</feature>
<feature type="region of interest" description="Domain I" evidence="1">
    <location>
        <begin position="1"/>
        <end position="64"/>
    </location>
</feature>
<feature type="region of interest" description="Domain II" evidence="1">
    <location>
        <begin position="65"/>
        <end position="143"/>
    </location>
</feature>
<feature type="region of interest" description="Flexible linker" evidence="1">
    <location>
        <begin position="144"/>
        <end position="155"/>
    </location>
</feature>
<feature type="region of interest" description="Domain III" evidence="1">
    <location>
        <begin position="156"/>
        <end position="204"/>
    </location>
</feature>
<accession>Q7MJ77</accession>
<dbReference type="EMBL" id="BA000037">
    <property type="protein sequence ID" value="BAC95049.1"/>
    <property type="status" value="ALT_INIT"/>
    <property type="molecule type" value="Genomic_DNA"/>
</dbReference>
<dbReference type="RefSeq" id="WP_011080038.1">
    <property type="nucleotide sequence ID" value="NC_005139.1"/>
</dbReference>
<dbReference type="SMR" id="Q7MJ77"/>
<dbReference type="STRING" id="672.VV93_v1c19950"/>
<dbReference type="KEGG" id="vvy:VV2285"/>
<dbReference type="eggNOG" id="COG0632">
    <property type="taxonomic scope" value="Bacteria"/>
</dbReference>
<dbReference type="HOGENOM" id="CLU_087936_0_0_6"/>
<dbReference type="Proteomes" id="UP000002675">
    <property type="component" value="Chromosome I"/>
</dbReference>
<dbReference type="GO" id="GO:0005737">
    <property type="term" value="C:cytoplasm"/>
    <property type="evidence" value="ECO:0007669"/>
    <property type="project" value="UniProtKB-SubCell"/>
</dbReference>
<dbReference type="GO" id="GO:0009379">
    <property type="term" value="C:Holliday junction helicase complex"/>
    <property type="evidence" value="ECO:0007669"/>
    <property type="project" value="InterPro"/>
</dbReference>
<dbReference type="GO" id="GO:0048476">
    <property type="term" value="C:Holliday junction resolvase complex"/>
    <property type="evidence" value="ECO:0007669"/>
    <property type="project" value="UniProtKB-UniRule"/>
</dbReference>
<dbReference type="GO" id="GO:0005524">
    <property type="term" value="F:ATP binding"/>
    <property type="evidence" value="ECO:0007669"/>
    <property type="project" value="InterPro"/>
</dbReference>
<dbReference type="GO" id="GO:0000400">
    <property type="term" value="F:four-way junction DNA binding"/>
    <property type="evidence" value="ECO:0007669"/>
    <property type="project" value="UniProtKB-UniRule"/>
</dbReference>
<dbReference type="GO" id="GO:0009378">
    <property type="term" value="F:four-way junction helicase activity"/>
    <property type="evidence" value="ECO:0007669"/>
    <property type="project" value="InterPro"/>
</dbReference>
<dbReference type="GO" id="GO:0006310">
    <property type="term" value="P:DNA recombination"/>
    <property type="evidence" value="ECO:0007669"/>
    <property type="project" value="UniProtKB-UniRule"/>
</dbReference>
<dbReference type="GO" id="GO:0006281">
    <property type="term" value="P:DNA repair"/>
    <property type="evidence" value="ECO:0007669"/>
    <property type="project" value="UniProtKB-UniRule"/>
</dbReference>
<dbReference type="CDD" id="cd14332">
    <property type="entry name" value="UBA_RuvA_C"/>
    <property type="match status" value="1"/>
</dbReference>
<dbReference type="FunFam" id="1.10.150.20:FF:000012">
    <property type="entry name" value="Holliday junction ATP-dependent DNA helicase RuvA"/>
    <property type="match status" value="1"/>
</dbReference>
<dbReference type="FunFam" id="1.10.8.10:FF:000008">
    <property type="entry name" value="Holliday junction ATP-dependent DNA helicase RuvA"/>
    <property type="match status" value="1"/>
</dbReference>
<dbReference type="FunFam" id="2.40.50.140:FF:000083">
    <property type="entry name" value="Holliday junction ATP-dependent DNA helicase RuvA"/>
    <property type="match status" value="1"/>
</dbReference>
<dbReference type="Gene3D" id="1.10.150.20">
    <property type="entry name" value="5' to 3' exonuclease, C-terminal subdomain"/>
    <property type="match status" value="1"/>
</dbReference>
<dbReference type="Gene3D" id="1.10.8.10">
    <property type="entry name" value="DNA helicase RuvA subunit, C-terminal domain"/>
    <property type="match status" value="1"/>
</dbReference>
<dbReference type="Gene3D" id="2.40.50.140">
    <property type="entry name" value="Nucleic acid-binding proteins"/>
    <property type="match status" value="1"/>
</dbReference>
<dbReference type="HAMAP" id="MF_00031">
    <property type="entry name" value="DNA_HJ_migration_RuvA"/>
    <property type="match status" value="1"/>
</dbReference>
<dbReference type="InterPro" id="IPR013849">
    <property type="entry name" value="DNA_helicase_Holl-junc_RuvA_I"/>
</dbReference>
<dbReference type="InterPro" id="IPR003583">
    <property type="entry name" value="Hlx-hairpin-Hlx_DNA-bd_motif"/>
</dbReference>
<dbReference type="InterPro" id="IPR012340">
    <property type="entry name" value="NA-bd_OB-fold"/>
</dbReference>
<dbReference type="InterPro" id="IPR000085">
    <property type="entry name" value="RuvA"/>
</dbReference>
<dbReference type="InterPro" id="IPR010994">
    <property type="entry name" value="RuvA_2-like"/>
</dbReference>
<dbReference type="InterPro" id="IPR011114">
    <property type="entry name" value="RuvA_C"/>
</dbReference>
<dbReference type="InterPro" id="IPR036267">
    <property type="entry name" value="RuvA_C_sf"/>
</dbReference>
<dbReference type="NCBIfam" id="TIGR00084">
    <property type="entry name" value="ruvA"/>
    <property type="match status" value="1"/>
</dbReference>
<dbReference type="Pfam" id="PF14520">
    <property type="entry name" value="HHH_5"/>
    <property type="match status" value="1"/>
</dbReference>
<dbReference type="Pfam" id="PF07499">
    <property type="entry name" value="RuvA_C"/>
    <property type="match status" value="1"/>
</dbReference>
<dbReference type="Pfam" id="PF01330">
    <property type="entry name" value="RuvA_N"/>
    <property type="match status" value="1"/>
</dbReference>
<dbReference type="SMART" id="SM00278">
    <property type="entry name" value="HhH1"/>
    <property type="match status" value="2"/>
</dbReference>
<dbReference type="SUPFAM" id="SSF46929">
    <property type="entry name" value="DNA helicase RuvA subunit, C-terminal domain"/>
    <property type="match status" value="1"/>
</dbReference>
<dbReference type="SUPFAM" id="SSF50249">
    <property type="entry name" value="Nucleic acid-binding proteins"/>
    <property type="match status" value="1"/>
</dbReference>
<dbReference type="SUPFAM" id="SSF47781">
    <property type="entry name" value="RuvA domain 2-like"/>
    <property type="match status" value="1"/>
</dbReference>
<proteinExistence type="inferred from homology"/>
<evidence type="ECO:0000255" key="1">
    <source>
        <dbReference type="HAMAP-Rule" id="MF_00031"/>
    </source>
</evidence>
<evidence type="ECO:0000305" key="2"/>
<organism>
    <name type="scientific">Vibrio vulnificus (strain YJ016)</name>
    <dbReference type="NCBI Taxonomy" id="196600"/>
    <lineage>
        <taxon>Bacteria</taxon>
        <taxon>Pseudomonadati</taxon>
        <taxon>Pseudomonadota</taxon>
        <taxon>Gammaproteobacteria</taxon>
        <taxon>Vibrionales</taxon>
        <taxon>Vibrionaceae</taxon>
        <taxon>Vibrio</taxon>
    </lineage>
</organism>
<sequence length="204" mass="22205">MIGRLRGILLEKQPPELLIEVNGIGYEVQMPMSCFYELPNIGEEAIIYTHFVVREDAQLLYGFNTVKERALFREVIKANGVGPKLGLAILSGMTASQFVASVEREDISTLVKLPGVGKKTAERLVVEMKDRLKGWSAGDLFTPFTDAAPVDSGSTSSNSAEEEAVSALLALGYKPVQASKVVSQIAKPDMTSEQLIREALKSMV</sequence>
<comment type="function">
    <text evidence="1">The RuvA-RuvB-RuvC complex processes Holliday junction (HJ) DNA during genetic recombination and DNA repair, while the RuvA-RuvB complex plays an important role in the rescue of blocked DNA replication forks via replication fork reversal (RFR). RuvA specifically binds to HJ cruciform DNA, conferring on it an open structure. The RuvB hexamer acts as an ATP-dependent pump, pulling dsDNA into and through the RuvAB complex. HJ branch migration allows RuvC to scan DNA until it finds its consensus sequence, where it cleaves and resolves the cruciform DNA.</text>
</comment>
<comment type="subunit">
    <text evidence="1">Homotetramer. Forms an RuvA(8)-RuvB(12)-Holliday junction (HJ) complex. HJ DNA is sandwiched between 2 RuvA tetramers; dsDNA enters through RuvA and exits via RuvB. An RuvB hexamer assembles on each DNA strand where it exits the tetramer. Each RuvB hexamer is contacted by two RuvA subunits (via domain III) on 2 adjacent RuvB subunits; this complex drives branch migration. In the full resolvosome a probable DNA-RuvA(4)-RuvB(12)-RuvC(2) complex forms which resolves the HJ.</text>
</comment>
<comment type="subcellular location">
    <subcellularLocation>
        <location evidence="1">Cytoplasm</location>
    </subcellularLocation>
</comment>
<comment type="domain">
    <text evidence="1">Has three domains with a flexible linker between the domains II and III and assumes an 'L' shape. Domain III is highly mobile and contacts RuvB.</text>
</comment>
<comment type="similarity">
    <text evidence="1">Belongs to the RuvA family.</text>
</comment>
<comment type="sequence caution" evidence="2">
    <conflict type="erroneous initiation">
        <sequence resource="EMBL-CDS" id="BAC95049"/>
    </conflict>
    <text>Extended N-terminus.</text>
</comment>